<proteinExistence type="evidence at protein level"/>
<dbReference type="EC" id="1.14.14.42" evidence="6"/>
<dbReference type="EMBL" id="AC006341">
    <property type="protein sequence ID" value="AAD34692.1"/>
    <property type="status" value="ALT_SEQ"/>
    <property type="molecule type" value="Genomic_DNA"/>
</dbReference>
<dbReference type="EMBL" id="CP002684">
    <property type="protein sequence ID" value="AEE29446.1"/>
    <property type="molecule type" value="Genomic_DNA"/>
</dbReference>
<dbReference type="EMBL" id="AY064649">
    <property type="protein sequence ID" value="AAL47360.1"/>
    <property type="molecule type" value="mRNA"/>
</dbReference>
<dbReference type="EMBL" id="AF370512">
    <property type="protein sequence ID" value="AAK43889.1"/>
    <property type="molecule type" value="mRNA"/>
</dbReference>
<dbReference type="EMBL" id="AF275259">
    <property type="protein sequence ID" value="AAG24796.1"/>
    <property type="molecule type" value="mRNA"/>
</dbReference>
<dbReference type="PIR" id="C86299">
    <property type="entry name" value="C86299"/>
</dbReference>
<dbReference type="RefSeq" id="NP_563995.2">
    <property type="nucleotide sequence ID" value="NM_101506.3"/>
</dbReference>
<dbReference type="SMR" id="Q9FUY7"/>
<dbReference type="FunCoup" id="Q9FUY7">
    <property type="interactions" value="80"/>
</dbReference>
<dbReference type="STRING" id="3702.Q9FUY7"/>
<dbReference type="PaxDb" id="3702-AT1G16400.1"/>
<dbReference type="ProteomicsDB" id="240582"/>
<dbReference type="EnsemblPlants" id="AT1G16400.1">
    <property type="protein sequence ID" value="AT1G16400.1"/>
    <property type="gene ID" value="AT1G16400"/>
</dbReference>
<dbReference type="GeneID" id="838210"/>
<dbReference type="Gramene" id="AT1G16400.1">
    <property type="protein sequence ID" value="AT1G16400.1"/>
    <property type="gene ID" value="AT1G16400"/>
</dbReference>
<dbReference type="KEGG" id="ath:AT1G16400"/>
<dbReference type="Araport" id="AT1G16400"/>
<dbReference type="TAIR" id="AT1G16400">
    <property type="gene designation" value="CYP79F2"/>
</dbReference>
<dbReference type="eggNOG" id="KOG0156">
    <property type="taxonomic scope" value="Eukaryota"/>
</dbReference>
<dbReference type="HOGENOM" id="CLU_001570_4_0_1"/>
<dbReference type="InParanoid" id="Q9FUY7"/>
<dbReference type="OMA" id="AYIHSMY"/>
<dbReference type="PhylomeDB" id="Q9FUY7"/>
<dbReference type="BioCyc" id="ARA:AT1G16400-MONOMER"/>
<dbReference type="BioCyc" id="MetaCyc:AT1G16400-MONOMER"/>
<dbReference type="BRENDA" id="1.14.14.42">
    <property type="organism ID" value="399"/>
</dbReference>
<dbReference type="SABIO-RK" id="Q9FUY7"/>
<dbReference type="PRO" id="PR:Q9FUY7"/>
<dbReference type="Proteomes" id="UP000006548">
    <property type="component" value="Chromosome 1"/>
</dbReference>
<dbReference type="ExpressionAtlas" id="Q9FUY7">
    <property type="expression patterns" value="baseline and differential"/>
</dbReference>
<dbReference type="GO" id="GO:0005783">
    <property type="term" value="C:endoplasmic reticulum"/>
    <property type="evidence" value="ECO:0000314"/>
    <property type="project" value="TAIR"/>
</dbReference>
<dbReference type="GO" id="GO:0005789">
    <property type="term" value="C:endoplasmic reticulum membrane"/>
    <property type="evidence" value="ECO:0007669"/>
    <property type="project" value="UniProtKB-SubCell"/>
</dbReference>
<dbReference type="GO" id="GO:0020037">
    <property type="term" value="F:heme binding"/>
    <property type="evidence" value="ECO:0007669"/>
    <property type="project" value="InterPro"/>
</dbReference>
<dbReference type="GO" id="GO:0120526">
    <property type="term" value="F:homomethionine N-monooxygenase activity"/>
    <property type="evidence" value="ECO:0007669"/>
    <property type="project" value="UniProtKB-EC"/>
</dbReference>
<dbReference type="GO" id="GO:0005506">
    <property type="term" value="F:iron ion binding"/>
    <property type="evidence" value="ECO:0007669"/>
    <property type="project" value="InterPro"/>
</dbReference>
<dbReference type="GO" id="GO:0016709">
    <property type="term" value="F:oxidoreductase activity, acting on paired donors, with incorporation or reduction of molecular oxygen, NAD(P)H as one donor, and incorporation of one atom of oxygen"/>
    <property type="evidence" value="ECO:0000314"/>
    <property type="project" value="TAIR"/>
</dbReference>
<dbReference type="GO" id="GO:0019761">
    <property type="term" value="P:glucosinolate biosynthetic process"/>
    <property type="evidence" value="ECO:0000315"/>
    <property type="project" value="TAIR"/>
</dbReference>
<dbReference type="CDD" id="cd20658">
    <property type="entry name" value="CYP79"/>
    <property type="match status" value="1"/>
</dbReference>
<dbReference type="Gene3D" id="1.10.630.10">
    <property type="entry name" value="Cytochrome P450"/>
    <property type="match status" value="1"/>
</dbReference>
<dbReference type="InterPro" id="IPR001128">
    <property type="entry name" value="Cyt_P450"/>
</dbReference>
<dbReference type="InterPro" id="IPR017972">
    <property type="entry name" value="Cyt_P450_CS"/>
</dbReference>
<dbReference type="InterPro" id="IPR002401">
    <property type="entry name" value="Cyt_P450_E_grp-I"/>
</dbReference>
<dbReference type="InterPro" id="IPR036396">
    <property type="entry name" value="Cyt_P450_sf"/>
</dbReference>
<dbReference type="PANTHER" id="PTHR47944:SF19">
    <property type="entry name" value="CYTOCHROME P450 77A4"/>
    <property type="match status" value="1"/>
</dbReference>
<dbReference type="PANTHER" id="PTHR47944">
    <property type="entry name" value="CYTOCHROME P450 98A9"/>
    <property type="match status" value="1"/>
</dbReference>
<dbReference type="Pfam" id="PF00067">
    <property type="entry name" value="p450"/>
    <property type="match status" value="1"/>
</dbReference>
<dbReference type="PRINTS" id="PR00463">
    <property type="entry name" value="EP450I"/>
</dbReference>
<dbReference type="SUPFAM" id="SSF48264">
    <property type="entry name" value="Cytochrome P450"/>
    <property type="match status" value="1"/>
</dbReference>
<dbReference type="PROSITE" id="PS00086">
    <property type="entry name" value="CYTOCHROME_P450"/>
    <property type="match status" value="1"/>
</dbReference>
<accession>Q9FUY7</accession>
<accession>Q94JZ4</accession>
<accession>Q9SA39</accession>
<organism>
    <name type="scientific">Arabidopsis thaliana</name>
    <name type="common">Mouse-ear cress</name>
    <dbReference type="NCBI Taxonomy" id="3702"/>
    <lineage>
        <taxon>Eukaryota</taxon>
        <taxon>Viridiplantae</taxon>
        <taxon>Streptophyta</taxon>
        <taxon>Embryophyta</taxon>
        <taxon>Tracheophyta</taxon>
        <taxon>Spermatophyta</taxon>
        <taxon>Magnoliopsida</taxon>
        <taxon>eudicotyledons</taxon>
        <taxon>Gunneridae</taxon>
        <taxon>Pentapetalae</taxon>
        <taxon>rosids</taxon>
        <taxon>malvids</taxon>
        <taxon>Brassicales</taxon>
        <taxon>Brassicaceae</taxon>
        <taxon>Camelineae</taxon>
        <taxon>Arabidopsis</taxon>
    </lineage>
</organism>
<comment type="function">
    <text evidence="5 6">Catalyzes the conversion of the long chain elongated methionines penta- and hexahomomethionine to their corresponding aldoximes 8-methylthiooctanaldoxime and 9-methylthiononanaldoxime.</text>
</comment>
<comment type="catalytic activity">
    <reaction evidence="6">
        <text>L-hexahomomethionine + 2 reduced [NADPH--hemoprotein reductase] + 2 O2 = (E)-9-(methylsulfanyl)nonanal oxime + 2 oxidized [NADPH--hemoprotein reductase] + CO2 + 3 H2O + 2 H(+)</text>
        <dbReference type="Rhea" id="RHEA:33295"/>
        <dbReference type="Rhea" id="RHEA-COMP:11964"/>
        <dbReference type="Rhea" id="RHEA-COMP:11965"/>
        <dbReference type="ChEBI" id="CHEBI:15377"/>
        <dbReference type="ChEBI" id="CHEBI:15378"/>
        <dbReference type="ChEBI" id="CHEBI:15379"/>
        <dbReference type="ChEBI" id="CHEBI:16526"/>
        <dbReference type="ChEBI" id="CHEBI:57618"/>
        <dbReference type="ChEBI" id="CHEBI:58210"/>
        <dbReference type="ChEBI" id="CHEBI:134636"/>
        <dbReference type="ChEBI" id="CHEBI:134685"/>
        <dbReference type="EC" id="1.14.14.42"/>
    </reaction>
</comment>
<comment type="catalytic activity">
    <reaction evidence="6">
        <text>L-pentahomomethionine + 2 reduced [NADPH--hemoprotein reductase] + 2 O2 = (E)-8-(methylsulfanyl)octanal oxime + 2 oxidized [NADPH--hemoprotein reductase] + CO2 + 3 H2O + 2 H(+)</text>
        <dbReference type="Rhea" id="RHEA:33291"/>
        <dbReference type="Rhea" id="RHEA-COMP:11964"/>
        <dbReference type="Rhea" id="RHEA-COMP:11965"/>
        <dbReference type="ChEBI" id="CHEBI:15377"/>
        <dbReference type="ChEBI" id="CHEBI:15378"/>
        <dbReference type="ChEBI" id="CHEBI:15379"/>
        <dbReference type="ChEBI" id="CHEBI:16526"/>
        <dbReference type="ChEBI" id="CHEBI:57618"/>
        <dbReference type="ChEBI" id="CHEBI:58210"/>
        <dbReference type="ChEBI" id="CHEBI:134635"/>
        <dbReference type="ChEBI" id="CHEBI:134684"/>
        <dbReference type="EC" id="1.14.14.42"/>
    </reaction>
</comment>
<comment type="catalytic activity">
    <reaction evidence="6">
        <text>an L-polyhomomethionine + 2 reduced [NADPH--hemoprotein reductase] + 2 O2 = an (E)-omega-(methylsulfanyl)-alkanal oxime + 2 oxidized [NADPH--hemoprotein reductase] + CO2 + 3 H2O + 2 H(+)</text>
        <dbReference type="Rhea" id="RHEA:51972"/>
        <dbReference type="Rhea" id="RHEA-COMP:11964"/>
        <dbReference type="Rhea" id="RHEA-COMP:11965"/>
        <dbReference type="Rhea" id="RHEA-COMP:13111"/>
        <dbReference type="Rhea" id="RHEA-COMP:13114"/>
        <dbReference type="ChEBI" id="CHEBI:15377"/>
        <dbReference type="ChEBI" id="CHEBI:15378"/>
        <dbReference type="ChEBI" id="CHEBI:15379"/>
        <dbReference type="ChEBI" id="CHEBI:16526"/>
        <dbReference type="ChEBI" id="CHEBI:57618"/>
        <dbReference type="ChEBI" id="CHEBI:58210"/>
        <dbReference type="ChEBI" id="CHEBI:134631"/>
        <dbReference type="ChEBI" id="CHEBI:134680"/>
        <dbReference type="EC" id="1.14.14.42"/>
    </reaction>
</comment>
<comment type="cofactor">
    <cofactor evidence="1">
        <name>heme</name>
        <dbReference type="ChEBI" id="CHEBI:30413"/>
    </cofactor>
</comment>
<comment type="biophysicochemical properties">
    <kinetics>
        <KM evidence="6">374 uM for pentahomomethionine</KM>
        <KM evidence="6">26 uM for hexahomomethionine</KM>
    </kinetics>
</comment>
<comment type="subcellular location">
    <subcellularLocation>
        <location evidence="3">Endoplasmic reticulum membrane</location>
        <topology evidence="3">Single-pass membrane protein</topology>
    </subcellularLocation>
</comment>
<comment type="tissue specificity">
    <text evidence="3 6">Highly expressed in hypocotyl and roots. Lower expression in siliques, stems and leaves. Barely detectable in flowers. Expressed only in the vascular bundles in apical plant parts.</text>
</comment>
<comment type="developmental stage">
    <text evidence="5">Expressed above the root elongation zone, but not in the root primordium.</text>
</comment>
<comment type="induction">
    <text evidence="4">By methyl jasmonate.</text>
</comment>
<comment type="disruption phenotype">
    <text evidence="6">Plants show a slight lateral root growth reduction.</text>
</comment>
<comment type="similarity">
    <text evidence="7">Belongs to the cytochrome P450 family.</text>
</comment>
<comment type="sequence caution" evidence="7">
    <conflict type="erroneous gene model prediction">
        <sequence resource="EMBL-CDS" id="AAD34692"/>
    </conflict>
</comment>
<name>C79F2_ARATH</name>
<sequence length="537" mass="61432">MMMKISFNTCFQILLGFIVFIASITLLGRIFSRPSKTKDRCRQLPPGRPGWPILGNLPELIMTRPRSKYFHLAMKELKTDIACFNFAGTHTITINSDEIAREAFRERDADLADRPQLSIVESIGDNYKTMGTSSYGEHFMKMKKVITTEIMSVKTLNMLEAARTIEADNLIAYIHSMYQRSETVDVRELSRVYGYAVTMRMLFGRRHVTKENMFSDDGRLGKAEKHHLEVIFNTLNCLPGFSPVDYVDRWLGGWNIDGEEERAKVNVNLVRSYNNPIIDERVEIWREKGGKAAVEDWLDTFITLKDQNGNYLVTPDEIKAQCVEFCIAAIDNPANNMEWTLGEMLKNPEILRKALKELDEVVGKDRLVQESDIRNLNYLKACCRETFRIHPSAHYVPPHVARQDTTLGGYFIPKGSHIHVCRPGLGRNPKIWKDPLAYEPERHLQGDGITKEVTLVETEMRFVSFSTGRRGCVGVKVGTIMMAMMLARFLQGFNWKLHRDFGPLSLEEDDASLLMAKPLLLSVEPRLASNLYPKFRP</sequence>
<gene>
    <name type="primary">CYP79F2</name>
    <name type="ordered locus">At1g16400</name>
    <name type="ORF">F3O9.20</name>
</gene>
<protein>
    <recommendedName>
        <fullName>Hexahomomethionine N-hydroxylase</fullName>
        <ecNumber evidence="6">1.14.14.42</ecNumber>
    </recommendedName>
    <alternativeName>
        <fullName>Cytochrome P450 79F2</fullName>
    </alternativeName>
</protein>
<reference key="1">
    <citation type="journal article" date="2000" name="Nature">
        <title>Sequence and analysis of chromosome 1 of the plant Arabidopsis thaliana.</title>
        <authorList>
            <person name="Theologis A."/>
            <person name="Ecker J.R."/>
            <person name="Palm C.J."/>
            <person name="Federspiel N.A."/>
            <person name="Kaul S."/>
            <person name="White O."/>
            <person name="Alonso J."/>
            <person name="Altafi H."/>
            <person name="Araujo R."/>
            <person name="Bowman C.L."/>
            <person name="Brooks S.Y."/>
            <person name="Buehler E."/>
            <person name="Chan A."/>
            <person name="Chao Q."/>
            <person name="Chen H."/>
            <person name="Cheuk R.F."/>
            <person name="Chin C.W."/>
            <person name="Chung M.K."/>
            <person name="Conn L."/>
            <person name="Conway A.B."/>
            <person name="Conway A.R."/>
            <person name="Creasy T.H."/>
            <person name="Dewar K."/>
            <person name="Dunn P."/>
            <person name="Etgu P."/>
            <person name="Feldblyum T.V."/>
            <person name="Feng J.-D."/>
            <person name="Fong B."/>
            <person name="Fujii C.Y."/>
            <person name="Gill J.E."/>
            <person name="Goldsmith A.D."/>
            <person name="Haas B."/>
            <person name="Hansen N.F."/>
            <person name="Hughes B."/>
            <person name="Huizar L."/>
            <person name="Hunter J.L."/>
            <person name="Jenkins J."/>
            <person name="Johnson-Hopson C."/>
            <person name="Khan S."/>
            <person name="Khaykin E."/>
            <person name="Kim C.J."/>
            <person name="Koo H.L."/>
            <person name="Kremenetskaia I."/>
            <person name="Kurtz D.B."/>
            <person name="Kwan A."/>
            <person name="Lam B."/>
            <person name="Langin-Hooper S."/>
            <person name="Lee A."/>
            <person name="Lee J.M."/>
            <person name="Lenz C.A."/>
            <person name="Li J.H."/>
            <person name="Li Y.-P."/>
            <person name="Lin X."/>
            <person name="Liu S.X."/>
            <person name="Liu Z.A."/>
            <person name="Luros J.S."/>
            <person name="Maiti R."/>
            <person name="Marziali A."/>
            <person name="Militscher J."/>
            <person name="Miranda M."/>
            <person name="Nguyen M."/>
            <person name="Nierman W.C."/>
            <person name="Osborne B.I."/>
            <person name="Pai G."/>
            <person name="Peterson J."/>
            <person name="Pham P.K."/>
            <person name="Rizzo M."/>
            <person name="Rooney T."/>
            <person name="Rowley D."/>
            <person name="Sakano H."/>
            <person name="Salzberg S.L."/>
            <person name="Schwartz J.R."/>
            <person name="Shinn P."/>
            <person name="Southwick A.M."/>
            <person name="Sun H."/>
            <person name="Tallon L.J."/>
            <person name="Tambunga G."/>
            <person name="Toriumi M.J."/>
            <person name="Town C.D."/>
            <person name="Utterback T."/>
            <person name="Van Aken S."/>
            <person name="Vaysberg M."/>
            <person name="Vysotskaia V.S."/>
            <person name="Walker M."/>
            <person name="Wu D."/>
            <person name="Yu G."/>
            <person name="Fraser C.M."/>
            <person name="Venter J.C."/>
            <person name="Davis R.W."/>
        </authorList>
    </citation>
    <scope>NUCLEOTIDE SEQUENCE [LARGE SCALE GENOMIC DNA]</scope>
    <source>
        <strain>cv. Columbia</strain>
    </source>
</reference>
<reference key="2">
    <citation type="journal article" date="2017" name="Plant J.">
        <title>Araport11: a complete reannotation of the Arabidopsis thaliana reference genome.</title>
        <authorList>
            <person name="Cheng C.Y."/>
            <person name="Krishnakumar V."/>
            <person name="Chan A.P."/>
            <person name="Thibaud-Nissen F."/>
            <person name="Schobel S."/>
            <person name="Town C.D."/>
        </authorList>
    </citation>
    <scope>GENOME REANNOTATION</scope>
    <source>
        <strain>cv. Columbia</strain>
    </source>
</reference>
<reference key="3">
    <citation type="journal article" date="2003" name="Science">
        <title>Empirical analysis of transcriptional activity in the Arabidopsis genome.</title>
        <authorList>
            <person name="Yamada K."/>
            <person name="Lim J."/>
            <person name="Dale J.M."/>
            <person name="Chen H."/>
            <person name="Shinn P."/>
            <person name="Palm C.J."/>
            <person name="Southwick A.M."/>
            <person name="Wu H.C."/>
            <person name="Kim C.J."/>
            <person name="Nguyen M."/>
            <person name="Pham P.K."/>
            <person name="Cheuk R.F."/>
            <person name="Karlin-Newmann G."/>
            <person name="Liu S.X."/>
            <person name="Lam B."/>
            <person name="Sakano H."/>
            <person name="Wu T."/>
            <person name="Yu G."/>
            <person name="Miranda M."/>
            <person name="Quach H.L."/>
            <person name="Tripp M."/>
            <person name="Chang C.H."/>
            <person name="Lee J.M."/>
            <person name="Toriumi M.J."/>
            <person name="Chan M.M."/>
            <person name="Tang C.C."/>
            <person name="Onodera C.S."/>
            <person name="Deng J.M."/>
            <person name="Akiyama K."/>
            <person name="Ansari Y."/>
            <person name="Arakawa T."/>
            <person name="Banh J."/>
            <person name="Banno F."/>
            <person name="Bowser L."/>
            <person name="Brooks S.Y."/>
            <person name="Carninci P."/>
            <person name="Chao Q."/>
            <person name="Choy N."/>
            <person name="Enju A."/>
            <person name="Goldsmith A.D."/>
            <person name="Gurjal M."/>
            <person name="Hansen N.F."/>
            <person name="Hayashizaki Y."/>
            <person name="Johnson-Hopson C."/>
            <person name="Hsuan V.W."/>
            <person name="Iida K."/>
            <person name="Karnes M."/>
            <person name="Khan S."/>
            <person name="Koesema E."/>
            <person name="Ishida J."/>
            <person name="Jiang P.X."/>
            <person name="Jones T."/>
            <person name="Kawai J."/>
            <person name="Kamiya A."/>
            <person name="Meyers C."/>
            <person name="Nakajima M."/>
            <person name="Narusaka M."/>
            <person name="Seki M."/>
            <person name="Sakurai T."/>
            <person name="Satou M."/>
            <person name="Tamse R."/>
            <person name="Vaysberg M."/>
            <person name="Wallender E.K."/>
            <person name="Wong C."/>
            <person name="Yamamura Y."/>
            <person name="Yuan S."/>
            <person name="Shinozaki K."/>
            <person name="Davis R.W."/>
            <person name="Theologis A."/>
            <person name="Ecker J.R."/>
        </authorList>
    </citation>
    <scope>NUCLEOTIDE SEQUENCE [LARGE SCALE MRNA]</scope>
    <source>
        <strain>cv. Columbia</strain>
    </source>
</reference>
<reference key="4">
    <citation type="journal article" date="2003" name="Plant J.">
        <title>CYP79F1 and CYP79F2 have distinct functions in the biosynthesis of aliphatic glucosinolates in Arabidopsis.</title>
        <authorList>
            <person name="Chen S."/>
            <person name="Glawischnig E."/>
            <person name="Joergensen K."/>
            <person name="Naur P."/>
            <person name="Joergensen B."/>
            <person name="Olsen C.-E."/>
            <person name="Hansen C.H."/>
            <person name="Rasmussen H."/>
            <person name="Pickett J.A."/>
            <person name="Halkier B.A."/>
        </authorList>
    </citation>
    <scope>NUCLEOTIDE SEQUENCE [MRNA] OF 3-537</scope>
    <scope>CATALYTIC ACTIVITY</scope>
    <scope>FUNCTION</scope>
    <scope>BIOPHYSICOCHEMICAL PROPERTIES</scope>
    <scope>TISSUE SPECIFICITY</scope>
    <scope>DISRUPTION PHENOTYPE</scope>
    <source>
        <strain>cv. Columbia</strain>
    </source>
</reference>
<reference key="5">
    <citation type="journal article" date="2001" name="Plant Cell">
        <title>Bus, a bushy Arabidopsis CYP79F1 knockout mutant with abolished synthesis of short-chain aliphatic glucosinolates.</title>
        <authorList>
            <person name="Reintanz B."/>
            <person name="Lehnen M."/>
            <person name="Reichelt M."/>
            <person name="Gershenzon J."/>
            <person name="Kowalczyk M."/>
            <person name="Sandberg G."/>
            <person name="Godde M."/>
            <person name="Uhl R."/>
            <person name="Palme K."/>
        </authorList>
    </citation>
    <scope>IDENTIFICATION</scope>
    <scope>TISSUE SPECIFICITY</scope>
    <scope>SUBCELLULAR LOCATION</scope>
    <source>
        <strain>cv. Columbia</strain>
    </source>
</reference>
<reference key="6">
    <citation type="journal article" date="2003" name="Plant Physiol.">
        <title>Modulation of CYP79 genes and glucosinolate profiles in Arabidopsis by defense signaling pathways.</title>
        <authorList>
            <person name="Mikkelsen M.D."/>
            <person name="Petersen B.L."/>
            <person name="Glawischnig E."/>
            <person name="Jensen A.B."/>
            <person name="Andreasson E."/>
            <person name="Halkier B.A."/>
        </authorList>
    </citation>
    <scope>INDUCTION BY METHYL JASMONATE</scope>
</reference>
<reference key="7">
    <citation type="journal article" date="2004" name="Plant Physiol.">
        <title>Functional analysis of the tandem-duplicated P450 genes SPS/BUS/CYP79F1 and CYP79F2 in glucosinolate biosynthesis and plant development by Ds transposition-generated double mutants.</title>
        <authorList>
            <person name="Tantikanjana T."/>
            <person name="Mikkelsen M.D."/>
            <person name="Hussain M."/>
            <person name="Halkier B.A."/>
            <person name="Sundaresan V."/>
        </authorList>
    </citation>
    <scope>FUNCTION</scope>
    <scope>DEVELOPMENTAL STAGE</scope>
    <source>
        <strain>cv. Wassilewskija</strain>
    </source>
</reference>
<feature type="chain" id="PRO_0000315844" description="Hexahomomethionine N-hydroxylase">
    <location>
        <begin position="1"/>
        <end position="537"/>
    </location>
</feature>
<feature type="transmembrane region" description="Helical" evidence="2">
    <location>
        <begin position="7"/>
        <end position="27"/>
    </location>
</feature>
<keyword id="KW-0256">Endoplasmic reticulum</keyword>
<keyword id="KW-0349">Heme</keyword>
<keyword id="KW-0408">Iron</keyword>
<keyword id="KW-0472">Membrane</keyword>
<keyword id="KW-0479">Metal-binding</keyword>
<keyword id="KW-0503">Monooxygenase</keyword>
<keyword id="KW-0560">Oxidoreductase</keyword>
<keyword id="KW-1185">Reference proteome</keyword>
<keyword id="KW-0812">Transmembrane</keyword>
<keyword id="KW-1133">Transmembrane helix</keyword>
<evidence type="ECO:0000250" key="1"/>
<evidence type="ECO:0000255" key="2"/>
<evidence type="ECO:0000269" key="3">
    <source>
    </source>
</evidence>
<evidence type="ECO:0000269" key="4">
    <source>
    </source>
</evidence>
<evidence type="ECO:0000269" key="5">
    <source>
    </source>
</evidence>
<evidence type="ECO:0000269" key="6">
    <source ref="4"/>
</evidence>
<evidence type="ECO:0000305" key="7"/>